<name>UVRC_CHLPN</name>
<organism>
    <name type="scientific">Chlamydia pneumoniae</name>
    <name type="common">Chlamydophila pneumoniae</name>
    <dbReference type="NCBI Taxonomy" id="83558"/>
    <lineage>
        <taxon>Bacteria</taxon>
        <taxon>Pseudomonadati</taxon>
        <taxon>Chlamydiota</taxon>
        <taxon>Chlamydiia</taxon>
        <taxon>Chlamydiales</taxon>
        <taxon>Chlamydiaceae</taxon>
        <taxon>Chlamydia/Chlamydophila group</taxon>
        <taxon>Chlamydia</taxon>
    </lineage>
</organism>
<accession>Q9Z6W6</accession>
<accession>Q9JQA6</accession>
<feature type="chain" id="PRO_0000138294" description="UvrABC system protein C">
    <location>
        <begin position="1"/>
        <end position="603"/>
    </location>
</feature>
<feature type="domain" description="GIY-YIG" evidence="1">
    <location>
        <begin position="13"/>
        <end position="92"/>
    </location>
</feature>
<feature type="domain" description="UVR" evidence="1">
    <location>
        <begin position="205"/>
        <end position="240"/>
    </location>
</feature>
<reference key="1">
    <citation type="journal article" date="1999" name="Nat. Genet.">
        <title>Comparative genomes of Chlamydia pneumoniae and C. trachomatis.</title>
        <authorList>
            <person name="Kalman S."/>
            <person name="Mitchell W.P."/>
            <person name="Marathe R."/>
            <person name="Lammel C.J."/>
            <person name="Fan J."/>
            <person name="Hyman R.W."/>
            <person name="Olinger L."/>
            <person name="Grimwood J."/>
            <person name="Davis R.W."/>
            <person name="Stephens R.S."/>
        </authorList>
    </citation>
    <scope>NUCLEOTIDE SEQUENCE [LARGE SCALE GENOMIC DNA]</scope>
    <source>
        <strain>CWL029</strain>
    </source>
</reference>
<reference key="2">
    <citation type="journal article" date="2000" name="Nucleic Acids Res.">
        <title>Genome sequences of Chlamydia trachomatis MoPn and Chlamydia pneumoniae AR39.</title>
        <authorList>
            <person name="Read T.D."/>
            <person name="Brunham R.C."/>
            <person name="Shen C."/>
            <person name="Gill S.R."/>
            <person name="Heidelberg J.F."/>
            <person name="White O."/>
            <person name="Hickey E.K."/>
            <person name="Peterson J.D."/>
            <person name="Utterback T.R."/>
            <person name="Berry K.J."/>
            <person name="Bass S."/>
            <person name="Linher K.D."/>
            <person name="Weidman J.F."/>
            <person name="Khouri H.M."/>
            <person name="Craven B."/>
            <person name="Bowman C."/>
            <person name="Dodson R.J."/>
            <person name="Gwinn M.L."/>
            <person name="Nelson W.C."/>
            <person name="DeBoy R.T."/>
            <person name="Kolonay J.F."/>
            <person name="McClarty G."/>
            <person name="Salzberg S.L."/>
            <person name="Eisen J.A."/>
            <person name="Fraser C.M."/>
        </authorList>
    </citation>
    <scope>NUCLEOTIDE SEQUENCE [LARGE SCALE GENOMIC DNA]</scope>
    <source>
        <strain>AR39</strain>
    </source>
</reference>
<reference key="3">
    <citation type="journal article" date="2000" name="Nucleic Acids Res.">
        <title>Comparison of whole genome sequences of Chlamydia pneumoniae J138 from Japan and CWL029 from USA.</title>
        <authorList>
            <person name="Shirai M."/>
            <person name="Hirakawa H."/>
            <person name="Kimoto M."/>
            <person name="Tabuchi M."/>
            <person name="Kishi F."/>
            <person name="Ouchi K."/>
            <person name="Shiba T."/>
            <person name="Ishii K."/>
            <person name="Hattori M."/>
            <person name="Kuhara S."/>
            <person name="Nakazawa T."/>
        </authorList>
    </citation>
    <scope>NUCLEOTIDE SEQUENCE [LARGE SCALE GENOMIC DNA]</scope>
    <source>
        <strain>J138</strain>
    </source>
</reference>
<reference key="4">
    <citation type="submission" date="2002-05" db="EMBL/GenBank/DDBJ databases">
        <title>The genome sequence of Chlamydia pneumoniae TW183 and comparison with other Chlamydia strains based on whole genome sequence analysis.</title>
        <authorList>
            <person name="Geng M.M."/>
            <person name="Schuhmacher A."/>
            <person name="Muehldorfer I."/>
            <person name="Bensch K.W."/>
            <person name="Schaefer K.P."/>
            <person name="Schneider S."/>
            <person name="Pohl T."/>
            <person name="Essig A."/>
            <person name="Marre R."/>
            <person name="Melchers K."/>
        </authorList>
    </citation>
    <scope>NUCLEOTIDE SEQUENCE [LARGE SCALE GENOMIC DNA]</scope>
    <source>
        <strain>TW-183</strain>
    </source>
</reference>
<evidence type="ECO:0000255" key="1">
    <source>
        <dbReference type="HAMAP-Rule" id="MF_00203"/>
    </source>
</evidence>
<comment type="function">
    <text evidence="1">The UvrABC repair system catalyzes the recognition and processing of DNA lesions. UvrC both incises the 5' and 3' sides of the lesion. The N-terminal half is responsible for the 3' incision and the C-terminal half is responsible for the 5' incision.</text>
</comment>
<comment type="subunit">
    <text evidence="1">Interacts with UvrB in an incision complex.</text>
</comment>
<comment type="subcellular location">
    <subcellularLocation>
        <location evidence="1">Cytoplasm</location>
    </subcellularLocation>
</comment>
<comment type="similarity">
    <text evidence="1">Belongs to the UvrC family.</text>
</comment>
<proteinExistence type="inferred from homology"/>
<dbReference type="EMBL" id="AE001363">
    <property type="protein sequence ID" value="AAD19078.1"/>
    <property type="molecule type" value="Genomic_DNA"/>
</dbReference>
<dbReference type="EMBL" id="AE002161">
    <property type="protein sequence ID" value="AAF38706.1"/>
    <property type="molecule type" value="Genomic_DNA"/>
</dbReference>
<dbReference type="EMBL" id="BA000008">
    <property type="protein sequence ID" value="BAA99148.1"/>
    <property type="molecule type" value="Genomic_DNA"/>
</dbReference>
<dbReference type="EMBL" id="AE009440">
    <property type="protein sequence ID" value="AAP98903.1"/>
    <property type="molecule type" value="Genomic_DNA"/>
</dbReference>
<dbReference type="PIR" id="B86608">
    <property type="entry name" value="B86608"/>
</dbReference>
<dbReference type="PIR" id="F72017">
    <property type="entry name" value="F72017"/>
</dbReference>
<dbReference type="RefSeq" id="NP_225135.1">
    <property type="nucleotide sequence ID" value="NC_000922.1"/>
</dbReference>
<dbReference type="RefSeq" id="WP_010883575.1">
    <property type="nucleotide sequence ID" value="NZ_LN847257.1"/>
</dbReference>
<dbReference type="SMR" id="Q9Z6W6"/>
<dbReference type="STRING" id="406984.CPK_ORF00353"/>
<dbReference type="GeneID" id="45050996"/>
<dbReference type="KEGG" id="cpa:CP_0921"/>
<dbReference type="KEGG" id="cpj:uvrC"/>
<dbReference type="KEGG" id="cpn:CPn_0940"/>
<dbReference type="KEGG" id="cpt:CpB0974"/>
<dbReference type="PATRIC" id="fig|115713.3.peg.1028"/>
<dbReference type="eggNOG" id="COG0322">
    <property type="taxonomic scope" value="Bacteria"/>
</dbReference>
<dbReference type="HOGENOM" id="CLU_014841_3_2_0"/>
<dbReference type="OrthoDB" id="9804933at2"/>
<dbReference type="Proteomes" id="UP000000583">
    <property type="component" value="Chromosome"/>
</dbReference>
<dbReference type="Proteomes" id="UP000000801">
    <property type="component" value="Chromosome"/>
</dbReference>
<dbReference type="GO" id="GO:0005737">
    <property type="term" value="C:cytoplasm"/>
    <property type="evidence" value="ECO:0007669"/>
    <property type="project" value="UniProtKB-SubCell"/>
</dbReference>
<dbReference type="GO" id="GO:0009380">
    <property type="term" value="C:excinuclease repair complex"/>
    <property type="evidence" value="ECO:0007669"/>
    <property type="project" value="InterPro"/>
</dbReference>
<dbReference type="GO" id="GO:0003677">
    <property type="term" value="F:DNA binding"/>
    <property type="evidence" value="ECO:0007669"/>
    <property type="project" value="UniProtKB-UniRule"/>
</dbReference>
<dbReference type="GO" id="GO:0009381">
    <property type="term" value="F:excinuclease ABC activity"/>
    <property type="evidence" value="ECO:0007669"/>
    <property type="project" value="UniProtKB-UniRule"/>
</dbReference>
<dbReference type="GO" id="GO:0006289">
    <property type="term" value="P:nucleotide-excision repair"/>
    <property type="evidence" value="ECO:0007669"/>
    <property type="project" value="UniProtKB-UniRule"/>
</dbReference>
<dbReference type="GO" id="GO:0009432">
    <property type="term" value="P:SOS response"/>
    <property type="evidence" value="ECO:0007669"/>
    <property type="project" value="UniProtKB-UniRule"/>
</dbReference>
<dbReference type="CDD" id="cd10434">
    <property type="entry name" value="GIY-YIG_UvrC_Cho"/>
    <property type="match status" value="1"/>
</dbReference>
<dbReference type="FunFam" id="3.40.1440.10:FF:000001">
    <property type="entry name" value="UvrABC system protein C"/>
    <property type="match status" value="1"/>
</dbReference>
<dbReference type="Gene3D" id="1.10.150.20">
    <property type="entry name" value="5' to 3' exonuclease, C-terminal subdomain"/>
    <property type="match status" value="1"/>
</dbReference>
<dbReference type="Gene3D" id="3.40.1440.10">
    <property type="entry name" value="GIY-YIG endonuclease"/>
    <property type="match status" value="1"/>
</dbReference>
<dbReference type="Gene3D" id="3.30.420.340">
    <property type="entry name" value="UvrC, RNAse H endonuclease domain"/>
    <property type="match status" value="1"/>
</dbReference>
<dbReference type="HAMAP" id="MF_00203">
    <property type="entry name" value="UvrC"/>
    <property type="match status" value="1"/>
</dbReference>
<dbReference type="InterPro" id="IPR000305">
    <property type="entry name" value="GIY-YIG_endonuc"/>
</dbReference>
<dbReference type="InterPro" id="IPR035901">
    <property type="entry name" value="GIY-YIG_endonuc_sf"/>
</dbReference>
<dbReference type="InterPro" id="IPR047296">
    <property type="entry name" value="GIY-YIG_UvrC_Cho"/>
</dbReference>
<dbReference type="InterPro" id="IPR010994">
    <property type="entry name" value="RuvA_2-like"/>
</dbReference>
<dbReference type="InterPro" id="IPR001943">
    <property type="entry name" value="UVR_dom"/>
</dbReference>
<dbReference type="InterPro" id="IPR036876">
    <property type="entry name" value="UVR_dom_sf"/>
</dbReference>
<dbReference type="InterPro" id="IPR050066">
    <property type="entry name" value="UvrABC_protein_C"/>
</dbReference>
<dbReference type="InterPro" id="IPR004791">
    <property type="entry name" value="UvrC"/>
</dbReference>
<dbReference type="InterPro" id="IPR001162">
    <property type="entry name" value="UvrC_RNase_H_dom"/>
</dbReference>
<dbReference type="InterPro" id="IPR038476">
    <property type="entry name" value="UvrC_RNase_H_dom_sf"/>
</dbReference>
<dbReference type="NCBIfam" id="TIGR00194">
    <property type="entry name" value="uvrC"/>
    <property type="match status" value="1"/>
</dbReference>
<dbReference type="PANTHER" id="PTHR30562:SF1">
    <property type="entry name" value="UVRABC SYSTEM PROTEIN C"/>
    <property type="match status" value="1"/>
</dbReference>
<dbReference type="PANTHER" id="PTHR30562">
    <property type="entry name" value="UVRC/OXIDOREDUCTASE"/>
    <property type="match status" value="1"/>
</dbReference>
<dbReference type="Pfam" id="PF01541">
    <property type="entry name" value="GIY-YIG"/>
    <property type="match status" value="1"/>
</dbReference>
<dbReference type="Pfam" id="PF22920">
    <property type="entry name" value="UvrC_RNaseH"/>
    <property type="match status" value="1"/>
</dbReference>
<dbReference type="Pfam" id="PF08459">
    <property type="entry name" value="UvrC_RNaseH_dom"/>
    <property type="match status" value="1"/>
</dbReference>
<dbReference type="SMART" id="SM00465">
    <property type="entry name" value="GIYc"/>
    <property type="match status" value="1"/>
</dbReference>
<dbReference type="SUPFAM" id="SSF46600">
    <property type="entry name" value="C-terminal UvrC-binding domain of UvrB"/>
    <property type="match status" value="1"/>
</dbReference>
<dbReference type="SUPFAM" id="SSF82771">
    <property type="entry name" value="GIY-YIG endonuclease"/>
    <property type="match status" value="1"/>
</dbReference>
<dbReference type="SUPFAM" id="SSF47781">
    <property type="entry name" value="RuvA domain 2-like"/>
    <property type="match status" value="1"/>
</dbReference>
<dbReference type="PROSITE" id="PS50164">
    <property type="entry name" value="GIY_YIG"/>
    <property type="match status" value="1"/>
</dbReference>
<dbReference type="PROSITE" id="PS50151">
    <property type="entry name" value="UVR"/>
    <property type="match status" value="1"/>
</dbReference>
<dbReference type="PROSITE" id="PS50165">
    <property type="entry name" value="UVRC"/>
    <property type="match status" value="1"/>
</dbReference>
<keyword id="KW-0963">Cytoplasm</keyword>
<keyword id="KW-0227">DNA damage</keyword>
<keyword id="KW-0228">DNA excision</keyword>
<keyword id="KW-0234">DNA repair</keyword>
<keyword id="KW-0267">Excision nuclease</keyword>
<keyword id="KW-0742">SOS response</keyword>
<sequence>MRIEDFSLKLIPSSPGVYLMKDVHDQVLYIGKAKNLKNRLASYFHEKGDSRERIPFLMKKTASIETIVVSNETEALLLENNLIKQHHPKYNVLLKDDKTFFCLAISLSHSWPKVEAIRTKAITSSQRQLIFGPYVSAEACHTLLEVISQWFPLRTCSDREFALRKRPCILYDMKRCLAPCVGYCTPEEYQGTLDKAILFLKGKIEEVVKDLEKVIQKASDNLEFEQAANYYRTLSLIKQAMAKQQVEKFHFQNIDALGLYRHKQRTILTLLTVRSGKLLGARHFSFFENAQEDQDLLSSFILQYYVSQPYIPKEILTPLPLEFPTLSYVLNAESPPRLRSPKTGYGKELLDLAYRNAKAYAATTLPSSTLPYQDFQNILRMSQYPYRIECYDNAHMQGAHATGVYIVFENNGFDPKQYRTFSIDSEKTQNDLALLEEVLLRRFHSLTTALPDMIVVDGGKTHYNKTKKIIQTLNLTGIQVVTIAKEKSNHSRGLNKEKIFCETFPEGFSLPPTSNLLQFFQILRDEAHRFAISKHRKKRGKALFEQEKIPGIGEVKRKRLLQKFKSWKQVMLSSQEELEAIPGLTKKDIAVLLARQKDFNKSD</sequence>
<protein>
    <recommendedName>
        <fullName evidence="1">UvrABC system protein C</fullName>
        <shortName evidence="1">Protein UvrC</shortName>
    </recommendedName>
    <alternativeName>
        <fullName evidence="1">Excinuclease ABC subunit C</fullName>
    </alternativeName>
</protein>
<gene>
    <name evidence="1" type="primary">uvrC</name>
    <name type="ordered locus">CPn_0940</name>
    <name type="ordered locus">CP_0921</name>
    <name type="ordered locus">CpB0974</name>
</gene>